<organism>
    <name type="scientific">Bacillus anthracis</name>
    <dbReference type="NCBI Taxonomy" id="1392"/>
    <lineage>
        <taxon>Bacteria</taxon>
        <taxon>Bacillati</taxon>
        <taxon>Bacillota</taxon>
        <taxon>Bacilli</taxon>
        <taxon>Bacillales</taxon>
        <taxon>Bacillaceae</taxon>
        <taxon>Bacillus</taxon>
        <taxon>Bacillus cereus group</taxon>
    </lineage>
</organism>
<sequence length="412" mass="47450">MREMYPKKGRVILHVDMNCFFASVEIAHDSSLQGKPLAVAGNEKERKGIIITCSYEAREYGIRTTMPLWEAKRLCPQLIVRRPNFTLYREASFQMFQILSRFTEKIQPVSIDEGYLDITDCYALGSPLEIAKMIQQALLTELQLPCSIGIAPNLFLAKTASDMKKPLGITVLRKRDIPEMIWPLPVGAMHGIGEKTAEKLNDIHIQTIEQLAKGNEHIIRAKIGKHGVDLQRRAKGMDDREVDPSQMGQHKSVGNSMTFSKDMDEEKELLDMLQRLSKSVSKRLQKRTLVSYNIQIMIKYHDRRTVTRSKQLKNAIWEERDIFQAASRLWKQHWDGDSVRLLGVTATEIEWKTESVKQLDLFSFEEDAKEEPLLAVIDQINDKYGMPLLQRGSQLLRKQEKSFQQKLESKFM</sequence>
<feature type="chain" id="PRO_0000173899" description="DNA polymerase IV">
    <location>
        <begin position="1"/>
        <end position="412"/>
    </location>
</feature>
<feature type="domain" description="UmuC" evidence="1">
    <location>
        <begin position="12"/>
        <end position="193"/>
    </location>
</feature>
<feature type="region of interest" description="Disordered" evidence="2">
    <location>
        <begin position="235"/>
        <end position="257"/>
    </location>
</feature>
<feature type="compositionally biased region" description="Polar residues" evidence="2">
    <location>
        <begin position="246"/>
        <end position="257"/>
    </location>
</feature>
<feature type="active site" evidence="1">
    <location>
        <position position="113"/>
    </location>
</feature>
<feature type="binding site" evidence="1">
    <location>
        <position position="16"/>
    </location>
    <ligand>
        <name>Mg(2+)</name>
        <dbReference type="ChEBI" id="CHEBI:18420"/>
    </ligand>
</feature>
<feature type="binding site" evidence="1">
    <location>
        <position position="112"/>
    </location>
    <ligand>
        <name>Mg(2+)</name>
        <dbReference type="ChEBI" id="CHEBI:18420"/>
    </ligand>
</feature>
<feature type="site" description="Substrate discrimination" evidence="1">
    <location>
        <position position="21"/>
    </location>
</feature>
<protein>
    <recommendedName>
        <fullName evidence="1">DNA polymerase IV</fullName>
        <shortName evidence="1">Pol IV</shortName>
        <ecNumber evidence="1">2.7.7.7</ecNumber>
    </recommendedName>
</protein>
<accession>Q81M86</accession>
<accession>Q6HTN7</accession>
<accession>Q6KMX8</accession>
<dbReference type="EC" id="2.7.7.7" evidence="1"/>
<dbReference type="EMBL" id="AE016879">
    <property type="protein sequence ID" value="AAP28082.1"/>
    <property type="molecule type" value="Genomic_DNA"/>
</dbReference>
<dbReference type="EMBL" id="AE017334">
    <property type="protein sequence ID" value="AAT33486.1"/>
    <property type="molecule type" value="Genomic_DNA"/>
</dbReference>
<dbReference type="EMBL" id="AE017225">
    <property type="protein sequence ID" value="AAT56352.1"/>
    <property type="molecule type" value="Genomic_DNA"/>
</dbReference>
<dbReference type="RefSeq" id="NP_846596.1">
    <property type="nucleotide sequence ID" value="NC_003997.3"/>
</dbReference>
<dbReference type="RefSeq" id="WP_001208841.1">
    <property type="nucleotide sequence ID" value="NZ_WXXJ01000027.1"/>
</dbReference>
<dbReference type="RefSeq" id="YP_030301.1">
    <property type="nucleotide sequence ID" value="NC_005945.1"/>
</dbReference>
<dbReference type="SMR" id="Q81M86"/>
<dbReference type="STRING" id="261594.GBAA_4366"/>
<dbReference type="GeneID" id="45024029"/>
<dbReference type="KEGG" id="ban:BA_4366"/>
<dbReference type="KEGG" id="bar:GBAA_4366"/>
<dbReference type="KEGG" id="bat:BAS4051"/>
<dbReference type="PATRIC" id="fig|198094.11.peg.4335"/>
<dbReference type="eggNOG" id="COG0389">
    <property type="taxonomic scope" value="Bacteria"/>
</dbReference>
<dbReference type="HOGENOM" id="CLU_012348_1_1_9"/>
<dbReference type="OMA" id="ASDYNKP"/>
<dbReference type="OrthoDB" id="9808813at2"/>
<dbReference type="Proteomes" id="UP000000427">
    <property type="component" value="Chromosome"/>
</dbReference>
<dbReference type="Proteomes" id="UP000000594">
    <property type="component" value="Chromosome"/>
</dbReference>
<dbReference type="GO" id="GO:0005829">
    <property type="term" value="C:cytosol"/>
    <property type="evidence" value="ECO:0007669"/>
    <property type="project" value="TreeGrafter"/>
</dbReference>
<dbReference type="GO" id="GO:0003684">
    <property type="term" value="F:damaged DNA binding"/>
    <property type="evidence" value="ECO:0007669"/>
    <property type="project" value="InterPro"/>
</dbReference>
<dbReference type="GO" id="GO:0003887">
    <property type="term" value="F:DNA-directed DNA polymerase activity"/>
    <property type="evidence" value="ECO:0007669"/>
    <property type="project" value="UniProtKB-UniRule"/>
</dbReference>
<dbReference type="GO" id="GO:0000287">
    <property type="term" value="F:magnesium ion binding"/>
    <property type="evidence" value="ECO:0007669"/>
    <property type="project" value="UniProtKB-UniRule"/>
</dbReference>
<dbReference type="GO" id="GO:0006261">
    <property type="term" value="P:DNA-templated DNA replication"/>
    <property type="evidence" value="ECO:0007669"/>
    <property type="project" value="UniProtKB-UniRule"/>
</dbReference>
<dbReference type="GO" id="GO:0042276">
    <property type="term" value="P:error-prone translesion synthesis"/>
    <property type="evidence" value="ECO:0007669"/>
    <property type="project" value="TreeGrafter"/>
</dbReference>
<dbReference type="GO" id="GO:0009432">
    <property type="term" value="P:SOS response"/>
    <property type="evidence" value="ECO:0007669"/>
    <property type="project" value="TreeGrafter"/>
</dbReference>
<dbReference type="CDD" id="cd03586">
    <property type="entry name" value="PolY_Pol_IV_kappa"/>
    <property type="match status" value="1"/>
</dbReference>
<dbReference type="FunFam" id="1.10.150.20:FF:000061">
    <property type="entry name" value="DNA polymerase IV"/>
    <property type="match status" value="1"/>
</dbReference>
<dbReference type="FunFam" id="3.30.1490.100:FF:000012">
    <property type="entry name" value="DNA polymerase IV"/>
    <property type="match status" value="1"/>
</dbReference>
<dbReference type="FunFam" id="3.40.1170.60:FF:000001">
    <property type="entry name" value="DNA polymerase IV"/>
    <property type="match status" value="1"/>
</dbReference>
<dbReference type="Gene3D" id="3.30.70.270">
    <property type="match status" value="1"/>
</dbReference>
<dbReference type="Gene3D" id="3.40.1170.60">
    <property type="match status" value="1"/>
</dbReference>
<dbReference type="Gene3D" id="1.10.150.20">
    <property type="entry name" value="5' to 3' exonuclease, C-terminal subdomain"/>
    <property type="match status" value="1"/>
</dbReference>
<dbReference type="Gene3D" id="3.30.1490.100">
    <property type="entry name" value="DNA polymerase, Y-family, little finger domain"/>
    <property type="match status" value="1"/>
</dbReference>
<dbReference type="HAMAP" id="MF_01113">
    <property type="entry name" value="DNApol_IV"/>
    <property type="match status" value="1"/>
</dbReference>
<dbReference type="InterPro" id="IPR043502">
    <property type="entry name" value="DNA/RNA_pol_sf"/>
</dbReference>
<dbReference type="InterPro" id="IPR036775">
    <property type="entry name" value="DNA_pol_Y-fam_lit_finger_sf"/>
</dbReference>
<dbReference type="InterPro" id="IPR017961">
    <property type="entry name" value="DNA_pol_Y-fam_little_finger"/>
</dbReference>
<dbReference type="InterPro" id="IPR050116">
    <property type="entry name" value="DNA_polymerase-Y"/>
</dbReference>
<dbReference type="InterPro" id="IPR022880">
    <property type="entry name" value="DNApol_IV"/>
</dbReference>
<dbReference type="InterPro" id="IPR024728">
    <property type="entry name" value="PolY_HhH_motif"/>
</dbReference>
<dbReference type="InterPro" id="IPR043128">
    <property type="entry name" value="Rev_trsase/Diguanyl_cyclase"/>
</dbReference>
<dbReference type="InterPro" id="IPR001126">
    <property type="entry name" value="UmuC"/>
</dbReference>
<dbReference type="NCBIfam" id="NF002492">
    <property type="entry name" value="PRK01810.1"/>
    <property type="match status" value="1"/>
</dbReference>
<dbReference type="NCBIfam" id="NF002677">
    <property type="entry name" value="PRK02406.1"/>
    <property type="match status" value="1"/>
</dbReference>
<dbReference type="PANTHER" id="PTHR11076:SF33">
    <property type="entry name" value="DNA POLYMERASE KAPPA"/>
    <property type="match status" value="1"/>
</dbReference>
<dbReference type="PANTHER" id="PTHR11076">
    <property type="entry name" value="DNA REPAIR POLYMERASE UMUC / TRANSFERASE FAMILY MEMBER"/>
    <property type="match status" value="1"/>
</dbReference>
<dbReference type="Pfam" id="PF00817">
    <property type="entry name" value="IMS"/>
    <property type="match status" value="1"/>
</dbReference>
<dbReference type="Pfam" id="PF11799">
    <property type="entry name" value="IMS_C"/>
    <property type="match status" value="1"/>
</dbReference>
<dbReference type="Pfam" id="PF11798">
    <property type="entry name" value="IMS_HHH"/>
    <property type="match status" value="1"/>
</dbReference>
<dbReference type="SUPFAM" id="SSF56672">
    <property type="entry name" value="DNA/RNA polymerases"/>
    <property type="match status" value="1"/>
</dbReference>
<dbReference type="SUPFAM" id="SSF100879">
    <property type="entry name" value="Lesion bypass DNA polymerase (Y-family), little finger domain"/>
    <property type="match status" value="1"/>
</dbReference>
<dbReference type="PROSITE" id="PS50173">
    <property type="entry name" value="UMUC"/>
    <property type="match status" value="1"/>
</dbReference>
<reference key="1">
    <citation type="journal article" date="2003" name="Nature">
        <title>The genome sequence of Bacillus anthracis Ames and comparison to closely related bacteria.</title>
        <authorList>
            <person name="Read T.D."/>
            <person name="Peterson S.N."/>
            <person name="Tourasse N.J."/>
            <person name="Baillie L.W."/>
            <person name="Paulsen I.T."/>
            <person name="Nelson K.E."/>
            <person name="Tettelin H."/>
            <person name="Fouts D.E."/>
            <person name="Eisen J.A."/>
            <person name="Gill S.R."/>
            <person name="Holtzapple E.K."/>
            <person name="Okstad O.A."/>
            <person name="Helgason E."/>
            <person name="Rilstone J."/>
            <person name="Wu M."/>
            <person name="Kolonay J.F."/>
            <person name="Beanan M.J."/>
            <person name="Dodson R.J."/>
            <person name="Brinkac L.M."/>
            <person name="Gwinn M.L."/>
            <person name="DeBoy R.T."/>
            <person name="Madpu R."/>
            <person name="Daugherty S.C."/>
            <person name="Durkin A.S."/>
            <person name="Haft D.H."/>
            <person name="Nelson W.C."/>
            <person name="Peterson J.D."/>
            <person name="Pop M."/>
            <person name="Khouri H.M."/>
            <person name="Radune D."/>
            <person name="Benton J.L."/>
            <person name="Mahamoud Y."/>
            <person name="Jiang L."/>
            <person name="Hance I.R."/>
            <person name="Weidman J.F."/>
            <person name="Berry K.J."/>
            <person name="Plaut R.D."/>
            <person name="Wolf A.M."/>
            <person name="Watkins K.L."/>
            <person name="Nierman W.C."/>
            <person name="Hazen A."/>
            <person name="Cline R.T."/>
            <person name="Redmond C."/>
            <person name="Thwaite J.E."/>
            <person name="White O."/>
            <person name="Salzberg S.L."/>
            <person name="Thomason B."/>
            <person name="Friedlander A.M."/>
            <person name="Koehler T.M."/>
            <person name="Hanna P.C."/>
            <person name="Kolstoe A.-B."/>
            <person name="Fraser C.M."/>
        </authorList>
    </citation>
    <scope>NUCLEOTIDE SEQUENCE [LARGE SCALE GENOMIC DNA]</scope>
    <source>
        <strain>Ames / isolate Porton</strain>
    </source>
</reference>
<reference key="2">
    <citation type="journal article" date="2009" name="J. Bacteriol.">
        <title>The complete genome sequence of Bacillus anthracis Ames 'Ancestor'.</title>
        <authorList>
            <person name="Ravel J."/>
            <person name="Jiang L."/>
            <person name="Stanley S.T."/>
            <person name="Wilson M.R."/>
            <person name="Decker R.S."/>
            <person name="Read T.D."/>
            <person name="Worsham P."/>
            <person name="Keim P.S."/>
            <person name="Salzberg S.L."/>
            <person name="Fraser-Liggett C.M."/>
            <person name="Rasko D.A."/>
        </authorList>
    </citation>
    <scope>NUCLEOTIDE SEQUENCE [LARGE SCALE GENOMIC DNA]</scope>
    <source>
        <strain>Ames ancestor</strain>
    </source>
</reference>
<reference key="3">
    <citation type="submission" date="2004-01" db="EMBL/GenBank/DDBJ databases">
        <title>Complete genome sequence of Bacillus anthracis Sterne.</title>
        <authorList>
            <person name="Brettin T.S."/>
            <person name="Bruce D."/>
            <person name="Challacombe J.F."/>
            <person name="Gilna P."/>
            <person name="Han C."/>
            <person name="Hill K."/>
            <person name="Hitchcock P."/>
            <person name="Jackson P."/>
            <person name="Keim P."/>
            <person name="Longmire J."/>
            <person name="Lucas S."/>
            <person name="Okinaka R."/>
            <person name="Richardson P."/>
            <person name="Rubin E."/>
            <person name="Tice H."/>
        </authorList>
    </citation>
    <scope>NUCLEOTIDE SEQUENCE [LARGE SCALE GENOMIC DNA]</scope>
    <source>
        <strain>Sterne</strain>
    </source>
</reference>
<comment type="function">
    <text evidence="1">Poorly processive, error-prone DNA polymerase involved in untargeted mutagenesis. Copies undamaged DNA at stalled replication forks, which arise in vivo from mismatched or misaligned primer ends. These misaligned primers can be extended by PolIV. Exhibits no 3'-5' exonuclease (proofreading) activity. May be involved in translesional synthesis, in conjunction with the beta clamp from PolIII.</text>
</comment>
<comment type="catalytic activity">
    <reaction evidence="1">
        <text>DNA(n) + a 2'-deoxyribonucleoside 5'-triphosphate = DNA(n+1) + diphosphate</text>
        <dbReference type="Rhea" id="RHEA:22508"/>
        <dbReference type="Rhea" id="RHEA-COMP:17339"/>
        <dbReference type="Rhea" id="RHEA-COMP:17340"/>
        <dbReference type="ChEBI" id="CHEBI:33019"/>
        <dbReference type="ChEBI" id="CHEBI:61560"/>
        <dbReference type="ChEBI" id="CHEBI:173112"/>
        <dbReference type="EC" id="2.7.7.7"/>
    </reaction>
</comment>
<comment type="cofactor">
    <cofactor evidence="1">
        <name>Mg(2+)</name>
        <dbReference type="ChEBI" id="CHEBI:18420"/>
    </cofactor>
    <text evidence="1">Binds 2 magnesium ions per subunit.</text>
</comment>
<comment type="subunit">
    <text evidence="1">Monomer.</text>
</comment>
<comment type="subcellular location">
    <subcellularLocation>
        <location evidence="1">Cytoplasm</location>
    </subcellularLocation>
</comment>
<comment type="similarity">
    <text evidence="1">Belongs to the DNA polymerase type-Y family.</text>
</comment>
<evidence type="ECO:0000255" key="1">
    <source>
        <dbReference type="HAMAP-Rule" id="MF_01113"/>
    </source>
</evidence>
<evidence type="ECO:0000256" key="2">
    <source>
        <dbReference type="SAM" id="MobiDB-lite"/>
    </source>
</evidence>
<proteinExistence type="inferred from homology"/>
<gene>
    <name evidence="1" type="primary">dinB</name>
    <name type="ordered locus">BA_4366</name>
    <name type="ordered locus">GBAA_4366</name>
    <name type="ordered locus">BAS4051</name>
</gene>
<keyword id="KW-0963">Cytoplasm</keyword>
<keyword id="KW-0227">DNA damage</keyword>
<keyword id="KW-0234">DNA repair</keyword>
<keyword id="KW-0235">DNA replication</keyword>
<keyword id="KW-0238">DNA-binding</keyword>
<keyword id="KW-0239">DNA-directed DNA polymerase</keyword>
<keyword id="KW-0460">Magnesium</keyword>
<keyword id="KW-0479">Metal-binding</keyword>
<keyword id="KW-0515">Mutator protein</keyword>
<keyword id="KW-0548">Nucleotidyltransferase</keyword>
<keyword id="KW-1185">Reference proteome</keyword>
<keyword id="KW-0808">Transferase</keyword>
<name>DPO4_BACAN</name>